<sequence length="208" mass="22598">MATQAAGIFNSAITTAATSGVKKLHFFSTTHRPKSLSFTKTAIRAEKTDSSAAAAAAPATKEAPVGFTPPQLDPNTPSPIFAGSTGGLLRKAQVEEFYVITWNSPKEQIFEMPTGGAAIMREGPNLLKLARKEQCLALGTRLRSKYKITYQFYRVFPNGEVQYLHPKDGVYPEKANPGREGVGLNMRSIGKNVSPIEVKFTGKQSYDL</sequence>
<keyword id="KW-0150">Chloroplast</keyword>
<keyword id="KW-0903">Direct protein sequencing</keyword>
<keyword id="KW-0472">Membrane</keyword>
<keyword id="KW-0597">Phosphoprotein</keyword>
<keyword id="KW-0602">Photosynthesis</keyword>
<keyword id="KW-0603">Photosystem I</keyword>
<keyword id="KW-0934">Plastid</keyword>
<keyword id="KW-1185">Reference proteome</keyword>
<keyword id="KW-0793">Thylakoid</keyword>
<keyword id="KW-0809">Transit peptide</keyword>
<reference key="1">
    <citation type="submission" date="1999-08" db="EMBL/GenBank/DDBJ databases">
        <title>Sequences and map position of 31 Arabidopsis thaliana cDNAs encoding organellar polypeptides.</title>
        <authorList>
            <person name="Legen J."/>
            <person name="Misera S."/>
            <person name="Herrmann R.G."/>
            <person name="Altschmied L."/>
        </authorList>
    </citation>
    <scope>NUCLEOTIDE SEQUENCE [MRNA]</scope>
    <source>
        <strain>cv. Columbia</strain>
    </source>
</reference>
<reference key="2">
    <citation type="journal article" date="1999" name="Nature">
        <title>Sequence and analysis of chromosome 4 of the plant Arabidopsis thaliana.</title>
        <authorList>
            <person name="Mayer K.F.X."/>
            <person name="Schueller C."/>
            <person name="Wambutt R."/>
            <person name="Murphy G."/>
            <person name="Volckaert G."/>
            <person name="Pohl T."/>
            <person name="Duesterhoeft A."/>
            <person name="Stiekema W."/>
            <person name="Entian K.-D."/>
            <person name="Terryn N."/>
            <person name="Harris B."/>
            <person name="Ansorge W."/>
            <person name="Brandt P."/>
            <person name="Grivell L.A."/>
            <person name="Rieger M."/>
            <person name="Weichselgartner M."/>
            <person name="de Simone V."/>
            <person name="Obermaier B."/>
            <person name="Mache R."/>
            <person name="Mueller M."/>
            <person name="Kreis M."/>
            <person name="Delseny M."/>
            <person name="Puigdomenech P."/>
            <person name="Watson M."/>
            <person name="Schmidtheini T."/>
            <person name="Reichert B."/>
            <person name="Portetelle D."/>
            <person name="Perez-Alonso M."/>
            <person name="Boutry M."/>
            <person name="Bancroft I."/>
            <person name="Vos P."/>
            <person name="Hoheisel J."/>
            <person name="Zimmermann W."/>
            <person name="Wedler H."/>
            <person name="Ridley P."/>
            <person name="Langham S.-A."/>
            <person name="McCullagh B."/>
            <person name="Bilham L."/>
            <person name="Robben J."/>
            <person name="van der Schueren J."/>
            <person name="Grymonprez B."/>
            <person name="Chuang Y.-J."/>
            <person name="Vandenbussche F."/>
            <person name="Braeken M."/>
            <person name="Weltjens I."/>
            <person name="Voet M."/>
            <person name="Bastiaens I."/>
            <person name="Aert R."/>
            <person name="Defoor E."/>
            <person name="Weitzenegger T."/>
            <person name="Bothe G."/>
            <person name="Ramsperger U."/>
            <person name="Hilbert H."/>
            <person name="Braun M."/>
            <person name="Holzer E."/>
            <person name="Brandt A."/>
            <person name="Peters S."/>
            <person name="van Staveren M."/>
            <person name="Dirkse W."/>
            <person name="Mooijman P."/>
            <person name="Klein Lankhorst R."/>
            <person name="Rose M."/>
            <person name="Hauf J."/>
            <person name="Koetter P."/>
            <person name="Berneiser S."/>
            <person name="Hempel S."/>
            <person name="Feldpausch M."/>
            <person name="Lamberth S."/>
            <person name="Van den Daele H."/>
            <person name="De Keyser A."/>
            <person name="Buysshaert C."/>
            <person name="Gielen J."/>
            <person name="Villarroel R."/>
            <person name="De Clercq R."/>
            <person name="van Montagu M."/>
            <person name="Rogers J."/>
            <person name="Cronin A."/>
            <person name="Quail M.A."/>
            <person name="Bray-Allen S."/>
            <person name="Clark L."/>
            <person name="Doggett J."/>
            <person name="Hall S."/>
            <person name="Kay M."/>
            <person name="Lennard N."/>
            <person name="McLay K."/>
            <person name="Mayes R."/>
            <person name="Pettett A."/>
            <person name="Rajandream M.A."/>
            <person name="Lyne M."/>
            <person name="Benes V."/>
            <person name="Rechmann S."/>
            <person name="Borkova D."/>
            <person name="Bloecker H."/>
            <person name="Scharfe M."/>
            <person name="Grimm M."/>
            <person name="Loehnert T.-H."/>
            <person name="Dose S."/>
            <person name="de Haan M."/>
            <person name="Maarse A.C."/>
            <person name="Schaefer M."/>
            <person name="Mueller-Auer S."/>
            <person name="Gabel C."/>
            <person name="Fuchs M."/>
            <person name="Fartmann B."/>
            <person name="Granderath K."/>
            <person name="Dauner D."/>
            <person name="Herzl A."/>
            <person name="Neumann S."/>
            <person name="Argiriou A."/>
            <person name="Vitale D."/>
            <person name="Liguori R."/>
            <person name="Piravandi E."/>
            <person name="Massenet O."/>
            <person name="Quigley F."/>
            <person name="Clabauld G."/>
            <person name="Muendlein A."/>
            <person name="Felber R."/>
            <person name="Schnabl S."/>
            <person name="Hiller R."/>
            <person name="Schmidt W."/>
            <person name="Lecharny A."/>
            <person name="Aubourg S."/>
            <person name="Chefdor F."/>
            <person name="Cooke R."/>
            <person name="Berger C."/>
            <person name="Monfort A."/>
            <person name="Casacuberta E."/>
            <person name="Gibbons T."/>
            <person name="Weber N."/>
            <person name="Vandenbol M."/>
            <person name="Bargues M."/>
            <person name="Terol J."/>
            <person name="Torres A."/>
            <person name="Perez-Perez A."/>
            <person name="Purnelle B."/>
            <person name="Bent E."/>
            <person name="Johnson S."/>
            <person name="Tacon D."/>
            <person name="Jesse T."/>
            <person name="Heijnen L."/>
            <person name="Schwarz S."/>
            <person name="Scholler P."/>
            <person name="Heber S."/>
            <person name="Francs P."/>
            <person name="Bielke C."/>
            <person name="Frishman D."/>
            <person name="Haase D."/>
            <person name="Lemcke K."/>
            <person name="Mewes H.-W."/>
            <person name="Stocker S."/>
            <person name="Zaccaria P."/>
            <person name="Bevan M."/>
            <person name="Wilson R.K."/>
            <person name="de la Bastide M."/>
            <person name="Habermann K."/>
            <person name="Parnell L."/>
            <person name="Dedhia N."/>
            <person name="Gnoj L."/>
            <person name="Schutz K."/>
            <person name="Huang E."/>
            <person name="Spiegel L."/>
            <person name="Sekhon M."/>
            <person name="Murray J."/>
            <person name="Sheet P."/>
            <person name="Cordes M."/>
            <person name="Abu-Threideh J."/>
            <person name="Stoneking T."/>
            <person name="Kalicki J."/>
            <person name="Graves T."/>
            <person name="Harmon G."/>
            <person name="Edwards J."/>
            <person name="Latreille P."/>
            <person name="Courtney L."/>
            <person name="Cloud J."/>
            <person name="Abbott A."/>
            <person name="Scott K."/>
            <person name="Johnson D."/>
            <person name="Minx P."/>
            <person name="Bentley D."/>
            <person name="Fulton B."/>
            <person name="Miller N."/>
            <person name="Greco T."/>
            <person name="Kemp K."/>
            <person name="Kramer J."/>
            <person name="Fulton L."/>
            <person name="Mardis E."/>
            <person name="Dante M."/>
            <person name="Pepin K."/>
            <person name="Hillier L.W."/>
            <person name="Nelson J."/>
            <person name="Spieth J."/>
            <person name="Ryan E."/>
            <person name="Andrews S."/>
            <person name="Geisel C."/>
            <person name="Layman D."/>
            <person name="Du H."/>
            <person name="Ali J."/>
            <person name="Berghoff A."/>
            <person name="Jones K."/>
            <person name="Drone K."/>
            <person name="Cotton M."/>
            <person name="Joshu C."/>
            <person name="Antonoiu B."/>
            <person name="Zidanic M."/>
            <person name="Strong C."/>
            <person name="Sun H."/>
            <person name="Lamar B."/>
            <person name="Yordan C."/>
            <person name="Ma P."/>
            <person name="Zhong J."/>
            <person name="Preston R."/>
            <person name="Vil D."/>
            <person name="Shekher M."/>
            <person name="Matero A."/>
            <person name="Shah R."/>
            <person name="Swaby I.K."/>
            <person name="O'Shaughnessy A."/>
            <person name="Rodriguez M."/>
            <person name="Hoffman J."/>
            <person name="Till S."/>
            <person name="Granat S."/>
            <person name="Shohdy N."/>
            <person name="Hasegawa A."/>
            <person name="Hameed A."/>
            <person name="Lodhi M."/>
            <person name="Johnson A."/>
            <person name="Chen E."/>
            <person name="Marra M.A."/>
            <person name="Martienssen R."/>
            <person name="McCombie W.R."/>
        </authorList>
    </citation>
    <scope>NUCLEOTIDE SEQUENCE [LARGE SCALE GENOMIC DNA]</scope>
    <source>
        <strain>cv. Columbia</strain>
    </source>
</reference>
<reference key="3">
    <citation type="journal article" date="2017" name="Plant J.">
        <title>Araport11: a complete reannotation of the Arabidopsis thaliana reference genome.</title>
        <authorList>
            <person name="Cheng C.Y."/>
            <person name="Krishnakumar V."/>
            <person name="Chan A.P."/>
            <person name="Thibaud-Nissen F."/>
            <person name="Schobel S."/>
            <person name="Town C.D."/>
        </authorList>
    </citation>
    <scope>GENOME REANNOTATION</scope>
    <source>
        <strain>cv. Columbia</strain>
    </source>
</reference>
<reference key="4">
    <citation type="journal article" date="2003" name="Science">
        <title>Empirical analysis of transcriptional activity in the Arabidopsis genome.</title>
        <authorList>
            <person name="Yamada K."/>
            <person name="Lim J."/>
            <person name="Dale J.M."/>
            <person name="Chen H."/>
            <person name="Shinn P."/>
            <person name="Palm C.J."/>
            <person name="Southwick A.M."/>
            <person name="Wu H.C."/>
            <person name="Kim C.J."/>
            <person name="Nguyen M."/>
            <person name="Pham P.K."/>
            <person name="Cheuk R.F."/>
            <person name="Karlin-Newmann G."/>
            <person name="Liu S.X."/>
            <person name="Lam B."/>
            <person name="Sakano H."/>
            <person name="Wu T."/>
            <person name="Yu G."/>
            <person name="Miranda M."/>
            <person name="Quach H.L."/>
            <person name="Tripp M."/>
            <person name="Chang C.H."/>
            <person name="Lee J.M."/>
            <person name="Toriumi M.J."/>
            <person name="Chan M.M."/>
            <person name="Tang C.C."/>
            <person name="Onodera C.S."/>
            <person name="Deng J.M."/>
            <person name="Akiyama K."/>
            <person name="Ansari Y."/>
            <person name="Arakawa T."/>
            <person name="Banh J."/>
            <person name="Banno F."/>
            <person name="Bowser L."/>
            <person name="Brooks S.Y."/>
            <person name="Carninci P."/>
            <person name="Chao Q."/>
            <person name="Choy N."/>
            <person name="Enju A."/>
            <person name="Goldsmith A.D."/>
            <person name="Gurjal M."/>
            <person name="Hansen N.F."/>
            <person name="Hayashizaki Y."/>
            <person name="Johnson-Hopson C."/>
            <person name="Hsuan V.W."/>
            <person name="Iida K."/>
            <person name="Karnes M."/>
            <person name="Khan S."/>
            <person name="Koesema E."/>
            <person name="Ishida J."/>
            <person name="Jiang P.X."/>
            <person name="Jones T."/>
            <person name="Kawai J."/>
            <person name="Kamiya A."/>
            <person name="Meyers C."/>
            <person name="Nakajima M."/>
            <person name="Narusaka M."/>
            <person name="Seki M."/>
            <person name="Sakurai T."/>
            <person name="Satou M."/>
            <person name="Tamse R."/>
            <person name="Vaysberg M."/>
            <person name="Wallender E.K."/>
            <person name="Wong C."/>
            <person name="Yamamura Y."/>
            <person name="Yuan S."/>
            <person name="Shinozaki K."/>
            <person name="Davis R.W."/>
            <person name="Theologis A."/>
            <person name="Ecker J.R."/>
        </authorList>
    </citation>
    <scope>NUCLEOTIDE SEQUENCE [LARGE SCALE MRNA]</scope>
    <source>
        <strain>cv. Columbia</strain>
    </source>
</reference>
<reference key="5">
    <citation type="submission" date="2002-03" db="EMBL/GenBank/DDBJ databases">
        <title>Full-length cDNA from Arabidopsis thaliana.</title>
        <authorList>
            <person name="Brover V.V."/>
            <person name="Troukhan M.E."/>
            <person name="Alexandrov N.A."/>
            <person name="Lu Y.-P."/>
            <person name="Flavell R.B."/>
            <person name="Feldmann K.A."/>
        </authorList>
    </citation>
    <scope>NUCLEOTIDE SEQUENCE [LARGE SCALE MRNA]</scope>
</reference>
<reference key="6">
    <citation type="journal article" date="2003" name="Mol. Cell. Proteomics">
        <title>Identification of three previously unknown in vivo protein phosphorylation sites in thylakoid membranes of Arabidopsis thaliana.</title>
        <authorList>
            <person name="Hansson M."/>
            <person name="Vener A.V."/>
        </authorList>
    </citation>
    <scope>PROTEIN SEQUENCE OF 46-61</scope>
    <scope>IDENTIFICATION BY MASS SPECTROMETRY</scope>
    <scope>PHOSPHORYLATION AT THR-48</scope>
    <source>
        <strain>cv. Wassilewskija</strain>
        <tissue>Leaf</tissue>
    </source>
</reference>
<reference key="7">
    <citation type="journal article" date="2008" name="Cell">
        <title>A complex containing PGRL1 and PGR5 is involved in the switch between linear and cyclic electron flow in Arabidopsis.</title>
        <authorList>
            <person name="DalCorso G."/>
            <person name="Pesaresi P."/>
            <person name="Masiero S."/>
            <person name="Aseeva E."/>
            <person name="Schuenemann D."/>
            <person name="Finazzi G."/>
            <person name="Joliot P."/>
            <person name="Barbato R."/>
            <person name="Leister D."/>
        </authorList>
    </citation>
    <scope>INTERACTION WITH PGRL1A AND PGRL1B</scope>
    <source>
        <strain>cv. Columbia</strain>
    </source>
</reference>
<comment type="function">
    <text>PsaD can form complexes with ferredoxin and ferredoxin-oxidoreductase in photosystem I (PS I) reaction center. PSAD may encode the ferredoxin-docking protein.</text>
</comment>
<comment type="subunit">
    <text evidence="5">Interacts with PGRL1A and PGRL1B.</text>
</comment>
<comment type="interaction">
    <interactant intactId="EBI-1805558">
        <id>Q9S7H1</id>
    </interactant>
    <interactant intactId="EBI-4426649">
        <id>Q17TI5</id>
        <label>BRX</label>
    </interactant>
    <organismsDiffer>false</organismsDiffer>
    <experiments>3</experiments>
</comment>
<comment type="interaction">
    <interactant intactId="EBI-1805558">
        <id>Q9S7H1</id>
    </interactant>
    <interactant intactId="EBI-25506855">
        <id>O23160</id>
        <label>MYB73</label>
    </interactant>
    <organismsDiffer>false</organismsDiffer>
    <experiments>3</experiments>
</comment>
<comment type="subcellular location">
    <subcellularLocation>
        <location>Plastid</location>
        <location>Chloroplast thylakoid membrane</location>
        <topology>Peripheral membrane protein</topology>
        <orientation>Stromal side</orientation>
    </subcellularLocation>
</comment>
<comment type="induction">
    <text>By light.</text>
</comment>
<comment type="PTM">
    <text evidence="4">Phosphorylated by a threonine specific thylakoid kinase in a light activated and redox-dependent manner.</text>
</comment>
<comment type="miscellaneous">
    <text>After Mass spectrometry, it is not clear if Ala-45 or Glu-46 is the N-terminus of the mature protein.</text>
</comment>
<comment type="similarity">
    <text evidence="6">Belongs to the PsaD family.</text>
</comment>
<dbReference type="EMBL" id="AJ245906">
    <property type="protein sequence ID" value="CAB52676.1"/>
    <property type="molecule type" value="mRNA"/>
</dbReference>
<dbReference type="EMBL" id="AC004044">
    <property type="protein sequence ID" value="AAD15351.1"/>
    <property type="molecule type" value="Genomic_DNA"/>
</dbReference>
<dbReference type="EMBL" id="AL161495">
    <property type="protein sequence ID" value="CAB77762.1"/>
    <property type="molecule type" value="Genomic_DNA"/>
</dbReference>
<dbReference type="EMBL" id="CP002687">
    <property type="protein sequence ID" value="AEE82228.1"/>
    <property type="molecule type" value="Genomic_DNA"/>
</dbReference>
<dbReference type="EMBL" id="AF324675">
    <property type="protein sequence ID" value="AAG40026.1"/>
    <property type="molecule type" value="mRNA"/>
</dbReference>
<dbReference type="EMBL" id="AF326887">
    <property type="protein sequence ID" value="AAG41469.1"/>
    <property type="molecule type" value="mRNA"/>
</dbReference>
<dbReference type="EMBL" id="AF389290">
    <property type="protein sequence ID" value="AAK63862.1"/>
    <property type="molecule type" value="mRNA"/>
</dbReference>
<dbReference type="EMBL" id="AY062512">
    <property type="protein sequence ID" value="AAL32590.1"/>
    <property type="molecule type" value="mRNA"/>
</dbReference>
<dbReference type="EMBL" id="AY081671">
    <property type="protein sequence ID" value="AAM10233.1"/>
    <property type="molecule type" value="mRNA"/>
</dbReference>
<dbReference type="EMBL" id="AY102159">
    <property type="protein sequence ID" value="AAM26726.1"/>
    <property type="molecule type" value="mRNA"/>
</dbReference>
<dbReference type="EMBL" id="AY113939">
    <property type="protein sequence ID" value="AAM44987.1"/>
    <property type="molecule type" value="mRNA"/>
</dbReference>
<dbReference type="EMBL" id="AY088533">
    <property type="protein sequence ID" value="AAM66066.1"/>
    <property type="molecule type" value="mRNA"/>
</dbReference>
<dbReference type="PIR" id="C85035">
    <property type="entry name" value="C85035"/>
</dbReference>
<dbReference type="SMR" id="Q9S7H1"/>
<dbReference type="BioGRID" id="13472">
    <property type="interactions" value="29"/>
</dbReference>
<dbReference type="FunCoup" id="Q9S7H1">
    <property type="interactions" value="921"/>
</dbReference>
<dbReference type="IntAct" id="Q9S7H1">
    <property type="interactions" value="23"/>
</dbReference>
<dbReference type="MINT" id="Q9S7H1"/>
<dbReference type="STRING" id="3702.Q9S7H1"/>
<dbReference type="iPTMnet" id="Q9S7H1"/>
<dbReference type="PaxDb" id="3702-AT4G02770.1"/>
<dbReference type="ProteomicsDB" id="226320"/>
<dbReference type="EnsemblPlants" id="AT4G02770.1">
    <property type="protein sequence ID" value="AT4G02770.1"/>
    <property type="gene ID" value="AT4G02770"/>
</dbReference>
<dbReference type="Gramene" id="AT4G02770.1">
    <property type="protein sequence ID" value="AT4G02770.1"/>
    <property type="gene ID" value="AT4G02770"/>
</dbReference>
<dbReference type="KEGG" id="ath:AT4G02770"/>
<dbReference type="Araport" id="AT4G02770"/>
<dbReference type="TAIR" id="AT4G02770">
    <property type="gene designation" value="PSAD-1"/>
</dbReference>
<dbReference type="eggNOG" id="ENOG502QQIC">
    <property type="taxonomic scope" value="Eukaryota"/>
</dbReference>
<dbReference type="HOGENOM" id="CLU_087107_0_0_1"/>
<dbReference type="InParanoid" id="Q9S7H1"/>
<dbReference type="OMA" id="IVPWKQS"/>
<dbReference type="OrthoDB" id="44at2759"/>
<dbReference type="PhylomeDB" id="Q9S7H1"/>
<dbReference type="BioCyc" id="ARA:AT4G02770-MONOMER"/>
<dbReference type="BioCyc" id="MetaCyc:MONOMER-1098"/>
<dbReference type="PRO" id="PR:Q9S7H1"/>
<dbReference type="Proteomes" id="UP000006548">
    <property type="component" value="Chromosome 4"/>
</dbReference>
<dbReference type="ExpressionAtlas" id="Q9S7H1">
    <property type="expression patterns" value="baseline and differential"/>
</dbReference>
<dbReference type="GO" id="GO:0009507">
    <property type="term" value="C:chloroplast"/>
    <property type="evidence" value="ECO:0007005"/>
    <property type="project" value="TAIR"/>
</dbReference>
<dbReference type="GO" id="GO:0009941">
    <property type="term" value="C:chloroplast envelope"/>
    <property type="evidence" value="ECO:0007005"/>
    <property type="project" value="TAIR"/>
</dbReference>
<dbReference type="GO" id="GO:0009534">
    <property type="term" value="C:chloroplast thylakoid"/>
    <property type="evidence" value="ECO:0007005"/>
    <property type="project" value="TAIR"/>
</dbReference>
<dbReference type="GO" id="GO:0009535">
    <property type="term" value="C:chloroplast thylakoid membrane"/>
    <property type="evidence" value="ECO:0007005"/>
    <property type="project" value="TAIR"/>
</dbReference>
<dbReference type="GO" id="GO:0005829">
    <property type="term" value="C:cytosol"/>
    <property type="evidence" value="ECO:0007005"/>
    <property type="project" value="TAIR"/>
</dbReference>
<dbReference type="GO" id="GO:0009538">
    <property type="term" value="C:photosystem I reaction center"/>
    <property type="evidence" value="ECO:0007669"/>
    <property type="project" value="InterPro"/>
</dbReference>
<dbReference type="GO" id="GO:0010287">
    <property type="term" value="C:plastoglobule"/>
    <property type="evidence" value="ECO:0007005"/>
    <property type="project" value="TAIR"/>
</dbReference>
<dbReference type="GO" id="GO:0009579">
    <property type="term" value="C:thylakoid"/>
    <property type="evidence" value="ECO:0007005"/>
    <property type="project" value="TAIR"/>
</dbReference>
<dbReference type="GO" id="GO:0003729">
    <property type="term" value="F:mRNA binding"/>
    <property type="evidence" value="ECO:0000314"/>
    <property type="project" value="TAIR"/>
</dbReference>
<dbReference type="GO" id="GO:0019904">
    <property type="term" value="F:protein domain specific binding"/>
    <property type="evidence" value="ECO:0000353"/>
    <property type="project" value="CAFA"/>
</dbReference>
<dbReference type="GO" id="GO:0140547">
    <property type="term" value="P:acquisition of seed longevity"/>
    <property type="evidence" value="ECO:0000315"/>
    <property type="project" value="TAIR"/>
</dbReference>
<dbReference type="GO" id="GO:0015979">
    <property type="term" value="P:photosynthesis"/>
    <property type="evidence" value="ECO:0007669"/>
    <property type="project" value="UniProtKB-KW"/>
</dbReference>
<dbReference type="FunFam" id="3.30.1470.10:FF:000002">
    <property type="entry name" value="Photosystem I reaction center subunit II"/>
    <property type="match status" value="1"/>
</dbReference>
<dbReference type="Gene3D" id="3.30.1470.10">
    <property type="entry name" value="Photosystem I PsaD, reaction center subunit II"/>
    <property type="match status" value="1"/>
</dbReference>
<dbReference type="InterPro" id="IPR003685">
    <property type="entry name" value="PsaD"/>
</dbReference>
<dbReference type="InterPro" id="IPR036579">
    <property type="entry name" value="PsaD_sf"/>
</dbReference>
<dbReference type="PANTHER" id="PTHR31982">
    <property type="entry name" value="PHOTOSYSTEM I REACTION CENTER SUBUNIT II-1, CHLOROPLASTIC-RELATED"/>
    <property type="match status" value="1"/>
</dbReference>
<dbReference type="PANTHER" id="PTHR31982:SF6">
    <property type="entry name" value="PHOTOSYSTEM I REACTION CENTER SUBUNIT II-1, CHLOROPLASTIC-RELATED"/>
    <property type="match status" value="1"/>
</dbReference>
<dbReference type="Pfam" id="PF02531">
    <property type="entry name" value="PsaD"/>
    <property type="match status" value="1"/>
</dbReference>
<dbReference type="SUPFAM" id="SSF64234">
    <property type="entry name" value="Photosystem I subunit PsaD"/>
    <property type="match status" value="1"/>
</dbReference>
<name>PSAD1_ARATH</name>
<proteinExistence type="evidence at protein level"/>
<gene>
    <name type="primary">psaD1</name>
    <name type="ordered locus">At4g02770</name>
    <name type="ORF">T5J8.7</name>
</gene>
<evidence type="ECO:0000250" key="1"/>
<evidence type="ECO:0000255" key="2"/>
<evidence type="ECO:0000256" key="3">
    <source>
        <dbReference type="SAM" id="MobiDB-lite"/>
    </source>
</evidence>
<evidence type="ECO:0000269" key="4">
    <source>
    </source>
</evidence>
<evidence type="ECO:0000269" key="5">
    <source>
    </source>
</evidence>
<evidence type="ECO:0000305" key="6"/>
<protein>
    <recommendedName>
        <fullName>Photosystem I reaction center subunit II-1, chloroplastic</fullName>
    </recommendedName>
    <alternativeName>
        <fullName>Photosystem I 20 kDa subunit 1</fullName>
        <shortName>PSI-D1</shortName>
    </alternativeName>
</protein>
<organism>
    <name type="scientific">Arabidopsis thaliana</name>
    <name type="common">Mouse-ear cress</name>
    <dbReference type="NCBI Taxonomy" id="3702"/>
    <lineage>
        <taxon>Eukaryota</taxon>
        <taxon>Viridiplantae</taxon>
        <taxon>Streptophyta</taxon>
        <taxon>Embryophyta</taxon>
        <taxon>Tracheophyta</taxon>
        <taxon>Spermatophyta</taxon>
        <taxon>Magnoliopsida</taxon>
        <taxon>eudicotyledons</taxon>
        <taxon>Gunneridae</taxon>
        <taxon>Pentapetalae</taxon>
        <taxon>rosids</taxon>
        <taxon>malvids</taxon>
        <taxon>Brassicales</taxon>
        <taxon>Brassicaceae</taxon>
        <taxon>Camelineae</taxon>
        <taxon>Arabidopsis</taxon>
    </lineage>
</organism>
<feature type="transit peptide" description="Chloroplast" evidence="2">
    <location>
        <begin position="1"/>
        <end position="45"/>
    </location>
</feature>
<feature type="chain" id="PRO_0000029370" description="Photosystem I reaction center subunit II-1, chloroplastic">
    <location>
        <begin position="46"/>
        <end position="208"/>
    </location>
</feature>
<feature type="region of interest" description="Disordered" evidence="3">
    <location>
        <begin position="49"/>
        <end position="72"/>
    </location>
</feature>
<feature type="region of interest" description="Ferredoxin and ferredoxin-oxidoreductase binding" evidence="1">
    <location>
        <begin position="141"/>
        <end position="149"/>
    </location>
</feature>
<feature type="compositionally biased region" description="Low complexity" evidence="3">
    <location>
        <begin position="50"/>
        <end position="64"/>
    </location>
</feature>
<feature type="modified residue" description="Phosphothreonine" evidence="4">
    <location>
        <position position="48"/>
    </location>
</feature>
<accession>Q9S7H1</accession>
<accession>Q8L9B6</accession>